<protein>
    <recommendedName>
        <fullName>Uncharacterized protein Mb1387</fullName>
    </recommendedName>
</protein>
<accession>P64824</accession>
<accession>A0A1R3XY53</accession>
<accession>Q11022</accession>
<accession>X2BHN0</accession>
<organism>
    <name type="scientific">Mycobacterium bovis (strain ATCC BAA-935 / AF2122/97)</name>
    <dbReference type="NCBI Taxonomy" id="233413"/>
    <lineage>
        <taxon>Bacteria</taxon>
        <taxon>Bacillati</taxon>
        <taxon>Actinomycetota</taxon>
        <taxon>Actinomycetes</taxon>
        <taxon>Mycobacteriales</taxon>
        <taxon>Mycobacteriaceae</taxon>
        <taxon>Mycobacterium</taxon>
        <taxon>Mycobacterium tuberculosis complex</taxon>
    </lineage>
</organism>
<name>Y1387_MYCBO</name>
<dbReference type="EMBL" id="LT708304">
    <property type="protein sequence ID" value="SIT99990.1"/>
    <property type="molecule type" value="Genomic_DNA"/>
</dbReference>
<dbReference type="RefSeq" id="NP_855041.1">
    <property type="nucleotide sequence ID" value="NC_002945.3"/>
</dbReference>
<dbReference type="RefSeq" id="WP_003406967.1">
    <property type="nucleotide sequence ID" value="NC_002945.4"/>
</dbReference>
<dbReference type="KEGG" id="mbo:BQ2027_MB1387"/>
<dbReference type="PATRIC" id="fig|233413.5.peg.1519"/>
<dbReference type="Proteomes" id="UP000001419">
    <property type="component" value="Chromosome"/>
</dbReference>
<reference key="1">
    <citation type="journal article" date="2003" name="Proc. Natl. Acad. Sci. U.S.A.">
        <title>The complete genome sequence of Mycobacterium bovis.</title>
        <authorList>
            <person name="Garnier T."/>
            <person name="Eiglmeier K."/>
            <person name="Camus J.-C."/>
            <person name="Medina N."/>
            <person name="Mansoor H."/>
            <person name="Pryor M."/>
            <person name="Duthoy S."/>
            <person name="Grondin S."/>
            <person name="Lacroix C."/>
            <person name="Monsempe C."/>
            <person name="Simon S."/>
            <person name="Harris B."/>
            <person name="Atkin R."/>
            <person name="Doggett J."/>
            <person name="Mayes R."/>
            <person name="Keating L."/>
            <person name="Wheeler P.R."/>
            <person name="Parkhill J."/>
            <person name="Barrell B.G."/>
            <person name="Cole S.T."/>
            <person name="Gordon S.V."/>
            <person name="Hewinson R.G."/>
        </authorList>
    </citation>
    <scope>NUCLEOTIDE SEQUENCE [LARGE SCALE GENOMIC DNA]</scope>
    <source>
        <strain>ATCC BAA-935 / AF2122/97</strain>
    </source>
</reference>
<reference key="2">
    <citation type="journal article" date="2017" name="Genome Announc.">
        <title>Updated reference genome sequence and annotation of Mycobacterium bovis AF2122/97.</title>
        <authorList>
            <person name="Malone K.M."/>
            <person name="Farrell D."/>
            <person name="Stuber T.P."/>
            <person name="Schubert O.T."/>
            <person name="Aebersold R."/>
            <person name="Robbe-Austerman S."/>
            <person name="Gordon S.V."/>
        </authorList>
    </citation>
    <scope>NUCLEOTIDE SEQUENCE [LARGE SCALE GENOMIC DNA]</scope>
    <scope>GENOME REANNOTATION</scope>
    <source>
        <strain>ATCC BAA-935 / AF2122/97</strain>
    </source>
</reference>
<evidence type="ECO:0000255" key="1"/>
<proteinExistence type="inferred from homology"/>
<keyword id="KW-1185">Reference proteome</keyword>
<keyword id="KW-0732">Signal</keyword>
<gene>
    <name type="ordered locus">BQ2027_MB1387</name>
</gene>
<sequence length="123" mass="12850">MARTLALRASAGLVAGMAMAAITLAPGARAETGEQFPGDGVFLVGTDIAPGTYRTEGPSNPLILVFGRVSELSTCSWSTHSAPEVSNENIVDTNTSMGPMSVVIPPTVAAFQTHNCKLWMRIS</sequence>
<feature type="signal peptide" evidence="1">
    <location>
        <begin position="1"/>
        <end position="20"/>
    </location>
</feature>
<feature type="chain" id="PRO_0000014098" description="Uncharacterized protein Mb1387">
    <location>
        <begin position="21"/>
        <end position="123"/>
    </location>
</feature>